<evidence type="ECO:0000255" key="1">
    <source>
        <dbReference type="PROSITE-ProRule" id="PRU00277"/>
    </source>
</evidence>
<evidence type="ECO:0000305" key="2"/>
<gene>
    <name type="primary">fkpA</name>
    <name type="ordered locus">BU533</name>
</gene>
<protein>
    <recommendedName>
        <fullName>FKBP-type peptidyl-prolyl cis-trans isomerase FkpA</fullName>
        <shortName>PPIase</shortName>
        <ecNumber>5.2.1.8</ecNumber>
    </recommendedName>
    <alternativeName>
        <fullName>Rotamase</fullName>
    </alternativeName>
</protein>
<sequence>MILYVPKSFSISAPISDIHLQSVLETKNTFHNNNEKLGYILGLSFGNYVNQTFEKQKKIGIELDRNSLLKGIQDAISGNLKLSHQDISSGLKELEKKLKHATKIQLKKNAKENFIQGELYMKNFSKLKGVKKTSSGLLYLLERAGEGEALKDETKITVHYKGTLINGLEFDNSYKRGRPVSLRLKDVILGWKEGLKYIKKGGKIKLVIPPNLAYGTEEVNGIPANSTLIFDIELLDVVNGV</sequence>
<feature type="chain" id="PRO_0000075364" description="FKBP-type peptidyl-prolyl cis-trans isomerase FkpA">
    <location>
        <begin position="1"/>
        <end position="241"/>
    </location>
</feature>
<feature type="domain" description="PPIase FKBP-type" evidence="1">
    <location>
        <begin position="153"/>
        <end position="241"/>
    </location>
</feature>
<proteinExistence type="inferred from homology"/>
<keyword id="KW-0413">Isomerase</keyword>
<keyword id="KW-1185">Reference proteome</keyword>
<keyword id="KW-0697">Rotamase</keyword>
<organism>
    <name type="scientific">Buchnera aphidicola subsp. Acyrthosiphon pisum (strain APS)</name>
    <name type="common">Acyrthosiphon pisum symbiotic bacterium</name>
    <dbReference type="NCBI Taxonomy" id="107806"/>
    <lineage>
        <taxon>Bacteria</taxon>
        <taxon>Pseudomonadati</taxon>
        <taxon>Pseudomonadota</taxon>
        <taxon>Gammaproteobacteria</taxon>
        <taxon>Enterobacterales</taxon>
        <taxon>Erwiniaceae</taxon>
        <taxon>Buchnera</taxon>
    </lineage>
</organism>
<dbReference type="EC" id="5.2.1.8"/>
<dbReference type="EMBL" id="BA000003">
    <property type="protein sequence ID" value="BAB13226.1"/>
    <property type="molecule type" value="Genomic_DNA"/>
</dbReference>
<dbReference type="RefSeq" id="NP_240340.1">
    <property type="nucleotide sequence ID" value="NC_002528.1"/>
</dbReference>
<dbReference type="SMR" id="P57599"/>
<dbReference type="STRING" id="563178.BUAP5A_526"/>
<dbReference type="EnsemblBacteria" id="BAB13226">
    <property type="protein sequence ID" value="BAB13226"/>
    <property type="gene ID" value="BAB13226"/>
</dbReference>
<dbReference type="KEGG" id="buc:BU533"/>
<dbReference type="PATRIC" id="fig|107806.10.peg.538"/>
<dbReference type="eggNOG" id="COG0545">
    <property type="taxonomic scope" value="Bacteria"/>
</dbReference>
<dbReference type="HOGENOM" id="CLU_013615_0_2_6"/>
<dbReference type="Proteomes" id="UP000001806">
    <property type="component" value="Chromosome"/>
</dbReference>
<dbReference type="GO" id="GO:0003755">
    <property type="term" value="F:peptidyl-prolyl cis-trans isomerase activity"/>
    <property type="evidence" value="ECO:0007669"/>
    <property type="project" value="UniProtKB-KW"/>
</dbReference>
<dbReference type="GO" id="GO:0006457">
    <property type="term" value="P:protein folding"/>
    <property type="evidence" value="ECO:0007669"/>
    <property type="project" value="InterPro"/>
</dbReference>
<dbReference type="Gene3D" id="3.10.50.40">
    <property type="match status" value="1"/>
</dbReference>
<dbReference type="Gene3D" id="1.10.287.460">
    <property type="entry name" value="Peptidyl-prolyl cis-trans isomerase, FKBP-type, N-terminal domain"/>
    <property type="match status" value="1"/>
</dbReference>
<dbReference type="InterPro" id="IPR046357">
    <property type="entry name" value="PPIase_dom_sf"/>
</dbReference>
<dbReference type="InterPro" id="IPR001179">
    <property type="entry name" value="PPIase_FKBP_dom"/>
</dbReference>
<dbReference type="InterPro" id="IPR000774">
    <property type="entry name" value="PPIase_FKBP_N"/>
</dbReference>
<dbReference type="InterPro" id="IPR036944">
    <property type="entry name" value="PPIase_FKBP_N_sf"/>
</dbReference>
<dbReference type="NCBIfam" id="NF008150">
    <property type="entry name" value="PRK10902.1"/>
    <property type="match status" value="1"/>
</dbReference>
<dbReference type="PANTHER" id="PTHR43811:SF19">
    <property type="entry name" value="39 KDA FK506-BINDING NUCLEAR PROTEIN"/>
    <property type="match status" value="1"/>
</dbReference>
<dbReference type="PANTHER" id="PTHR43811">
    <property type="entry name" value="FKBP-TYPE PEPTIDYL-PROLYL CIS-TRANS ISOMERASE FKPA"/>
    <property type="match status" value="1"/>
</dbReference>
<dbReference type="Pfam" id="PF00254">
    <property type="entry name" value="FKBP_C"/>
    <property type="match status" value="1"/>
</dbReference>
<dbReference type="Pfam" id="PF01346">
    <property type="entry name" value="FKBP_N"/>
    <property type="match status" value="1"/>
</dbReference>
<dbReference type="SUPFAM" id="SSF54534">
    <property type="entry name" value="FKBP-like"/>
    <property type="match status" value="1"/>
</dbReference>
<dbReference type="PROSITE" id="PS50059">
    <property type="entry name" value="FKBP_PPIASE"/>
    <property type="match status" value="1"/>
</dbReference>
<reference key="1">
    <citation type="journal article" date="2000" name="Nature">
        <title>Genome sequence of the endocellular bacterial symbiont of aphids Buchnera sp. APS.</title>
        <authorList>
            <person name="Shigenobu S."/>
            <person name="Watanabe H."/>
            <person name="Hattori M."/>
            <person name="Sakaki Y."/>
            <person name="Ishikawa H."/>
        </authorList>
    </citation>
    <scope>NUCLEOTIDE SEQUENCE [LARGE SCALE GENOMIC DNA]</scope>
    <source>
        <strain>APS</strain>
    </source>
</reference>
<accession>P57599</accession>
<comment type="function">
    <text>PPIases accelerate the folding of proteins. It catalyzes the cis-trans isomerization of proline imidic peptide bonds in oligopeptides.</text>
</comment>
<comment type="catalytic activity">
    <reaction>
        <text>[protein]-peptidylproline (omega=180) = [protein]-peptidylproline (omega=0)</text>
        <dbReference type="Rhea" id="RHEA:16237"/>
        <dbReference type="Rhea" id="RHEA-COMP:10747"/>
        <dbReference type="Rhea" id="RHEA-COMP:10748"/>
        <dbReference type="ChEBI" id="CHEBI:83833"/>
        <dbReference type="ChEBI" id="CHEBI:83834"/>
        <dbReference type="EC" id="5.2.1.8"/>
    </reaction>
</comment>
<comment type="similarity">
    <text evidence="2">Belongs to the FKBP-type PPIase family.</text>
</comment>
<name>FKBA_BUCAI</name>